<sequence>MPPFLLLEAVCVFLFSRVPPSLPLQEVHVSKETIGKISAASKMMWCSAAVDIMFLLDGSNSVGKGSFERSKHFAITVCDGLDISPERVRVGAFQFSSTPHLEFPLDSFSTQQEVKARIKRMVFKGGRTETELALKYLLHRGLPGGRNASVPQILIIVTDGKSQGDVALPSKQLKERGVTVFAVGVRFPRWEELHALASEPRGQHVLLAEQVEDATNGLFSTLSSSAICSSATPDCRVEAHPCEHRTLEMVREFAGNAPCWRGSRRTLAVLAAHCPFYSWKRVFLTHPATCYRTTCPGPCDSQPCQNGGTCVPEGLDGYQCLCPLAFGGEANCALKLSLECRVDLLFLLDSSAGTTLDGFLRAKVFVKRFVRAVLSEDSRARVGVATYSRELLVAVPVGEYQDVPDLVWSLDGIPFRGGPTLTGSALRQAAERGFGSATRTGQDRPRRVVVLLTESHSEDEVAGPARHARARELLLLGVGSEAVRAELEEITGSPKHVMVYSDPQDLFNQIPELQGKLCSRQRPGCRTQALDLVFMLDTSASVGPENFAQMQSFVRSCALQFEVNPDVTQVGLVVYGSQVQTAFGLDTKPTRAAMLRAISQAPYLGGVGSAGTALLHIYDKVMTVQRGARPGVPKAVVVLTGGRGAEDAAVPAQKLRNNGISVLVVGVGPVLSEGLRRLAGPRDSLIHVAAYADLRYHQDVLIEWLCGEAKQPVNLCKPSPCMNEGSCVLQNGSYRCKCRDGWEGPHCENRFLRRP</sequence>
<keyword id="KW-0025">Alternative splicing</keyword>
<keyword id="KW-1015">Disulfide bond</keyword>
<keyword id="KW-0245">EGF-like domain</keyword>
<keyword id="KW-0325">Glycoprotein</keyword>
<keyword id="KW-1267">Proteomics identification</keyword>
<keyword id="KW-1185">Reference proteome</keyword>
<keyword id="KW-0677">Repeat</keyword>
<keyword id="KW-0964">Secreted</keyword>
<keyword id="KW-0732">Signal</keyword>
<accession>Q5GFL6</accession>
<accession>A1A5D4</accession>
<accession>B5MDJ8</accession>
<accession>Q6ZS39</accession>
<accession>Q6ZWJ7</accession>
<accession>Q708C5</accession>
<accession>Q70UZ8</accession>
<protein>
    <recommendedName>
        <fullName>von Willebrand factor A domain-containing protein 2</fullName>
    </recommendedName>
    <alternativeName>
        <fullName>A domain-containing protein similar to matrilin and collagen</fullName>
        <shortName>AMACO</shortName>
    </alternativeName>
    <alternativeName>
        <fullName>Colon cancer secreted protein 2</fullName>
        <shortName>CCSP-2</shortName>
    </alternativeName>
</protein>
<gene>
    <name type="primary">VWA2</name>
    <name type="synonym">AMACO</name>
</gene>
<reference key="1">
    <citation type="journal article" date="2003" name="J. Biol. Chem.">
        <title>Identification and characterization of AMACO, a new member of the von Willebrand factor A-like domain protein superfamily with a regulated expression in the kidney.</title>
        <authorList>
            <person name="Sengle G."/>
            <person name="Kobbe B."/>
            <person name="Moergelin M."/>
            <person name="Paulsson M."/>
            <person name="Wagener R."/>
        </authorList>
    </citation>
    <scope>NUCLEOTIDE SEQUENCE [MRNA] (ISOFORM 1)</scope>
    <scope>VARIANT THR-9</scope>
    <source>
        <tissue>Placenta</tissue>
    </source>
</reference>
<reference key="2">
    <citation type="journal article" date="2005" name="Oncogene">
        <title>Colon cancer secreted protein-2 (CCSP-2), a novel candidate serological marker of colon neoplasia.</title>
        <authorList>
            <person name="Xin B."/>
            <person name="Platzer P."/>
            <person name="Fink S.P."/>
            <person name="Reese L."/>
            <person name="Nosrati A."/>
            <person name="Willson J.K.V."/>
            <person name="Wilson K."/>
            <person name="Markowitz S."/>
        </authorList>
    </citation>
    <scope>NUCLEOTIDE SEQUENCE [GENOMIC DNA / MRNA] (ISOFORM 1)</scope>
    <scope>TISSUE SPECIFICITY</scope>
    <scope>PROTEOLYTIC PROCESSING</scope>
    <scope>IDENTIFICATION BY MASS SPECTROMETRY</scope>
</reference>
<reference key="3">
    <citation type="journal article" date="2004" name="Nat. Genet.">
        <title>Complete sequencing and characterization of 21,243 full-length human cDNAs.</title>
        <authorList>
            <person name="Ota T."/>
            <person name="Suzuki Y."/>
            <person name="Nishikawa T."/>
            <person name="Otsuki T."/>
            <person name="Sugiyama T."/>
            <person name="Irie R."/>
            <person name="Wakamatsu A."/>
            <person name="Hayashi K."/>
            <person name="Sato H."/>
            <person name="Nagai K."/>
            <person name="Kimura K."/>
            <person name="Makita H."/>
            <person name="Sekine M."/>
            <person name="Obayashi M."/>
            <person name="Nishi T."/>
            <person name="Shibahara T."/>
            <person name="Tanaka T."/>
            <person name="Ishii S."/>
            <person name="Yamamoto J."/>
            <person name="Saito K."/>
            <person name="Kawai Y."/>
            <person name="Isono Y."/>
            <person name="Nakamura Y."/>
            <person name="Nagahari K."/>
            <person name="Murakami K."/>
            <person name="Yasuda T."/>
            <person name="Iwayanagi T."/>
            <person name="Wagatsuma M."/>
            <person name="Shiratori A."/>
            <person name="Sudo H."/>
            <person name="Hosoiri T."/>
            <person name="Kaku Y."/>
            <person name="Kodaira H."/>
            <person name="Kondo H."/>
            <person name="Sugawara M."/>
            <person name="Takahashi M."/>
            <person name="Kanda K."/>
            <person name="Yokoi T."/>
            <person name="Furuya T."/>
            <person name="Kikkawa E."/>
            <person name="Omura Y."/>
            <person name="Abe K."/>
            <person name="Kamihara K."/>
            <person name="Katsuta N."/>
            <person name="Sato K."/>
            <person name="Tanikawa M."/>
            <person name="Yamazaki M."/>
            <person name="Ninomiya K."/>
            <person name="Ishibashi T."/>
            <person name="Yamashita H."/>
            <person name="Murakawa K."/>
            <person name="Fujimori K."/>
            <person name="Tanai H."/>
            <person name="Kimata M."/>
            <person name="Watanabe M."/>
            <person name="Hiraoka S."/>
            <person name="Chiba Y."/>
            <person name="Ishida S."/>
            <person name="Ono Y."/>
            <person name="Takiguchi S."/>
            <person name="Watanabe S."/>
            <person name="Yosida M."/>
            <person name="Hotuta T."/>
            <person name="Kusano J."/>
            <person name="Kanehori K."/>
            <person name="Takahashi-Fujii A."/>
            <person name="Hara H."/>
            <person name="Tanase T.-O."/>
            <person name="Nomura Y."/>
            <person name="Togiya S."/>
            <person name="Komai F."/>
            <person name="Hara R."/>
            <person name="Takeuchi K."/>
            <person name="Arita M."/>
            <person name="Imose N."/>
            <person name="Musashino K."/>
            <person name="Yuuki H."/>
            <person name="Oshima A."/>
            <person name="Sasaki N."/>
            <person name="Aotsuka S."/>
            <person name="Yoshikawa Y."/>
            <person name="Matsunawa H."/>
            <person name="Ichihara T."/>
            <person name="Shiohata N."/>
            <person name="Sano S."/>
            <person name="Moriya S."/>
            <person name="Momiyama H."/>
            <person name="Satoh N."/>
            <person name="Takami S."/>
            <person name="Terashima Y."/>
            <person name="Suzuki O."/>
            <person name="Nakagawa S."/>
            <person name="Senoh A."/>
            <person name="Mizoguchi H."/>
            <person name="Goto Y."/>
            <person name="Shimizu F."/>
            <person name="Wakebe H."/>
            <person name="Hishigaki H."/>
            <person name="Watanabe T."/>
            <person name="Sugiyama A."/>
            <person name="Takemoto M."/>
            <person name="Kawakami B."/>
            <person name="Yamazaki M."/>
            <person name="Watanabe K."/>
            <person name="Kumagai A."/>
            <person name="Itakura S."/>
            <person name="Fukuzumi Y."/>
            <person name="Fujimori Y."/>
            <person name="Komiyama M."/>
            <person name="Tashiro H."/>
            <person name="Tanigami A."/>
            <person name="Fujiwara T."/>
            <person name="Ono T."/>
            <person name="Yamada K."/>
            <person name="Fujii Y."/>
            <person name="Ozaki K."/>
            <person name="Hirao M."/>
            <person name="Ohmori Y."/>
            <person name="Kawabata A."/>
            <person name="Hikiji T."/>
            <person name="Kobatake N."/>
            <person name="Inagaki H."/>
            <person name="Ikema Y."/>
            <person name="Okamoto S."/>
            <person name="Okitani R."/>
            <person name="Kawakami T."/>
            <person name="Noguchi S."/>
            <person name="Itoh T."/>
            <person name="Shigeta K."/>
            <person name="Senba T."/>
            <person name="Matsumura K."/>
            <person name="Nakajima Y."/>
            <person name="Mizuno T."/>
            <person name="Morinaga M."/>
            <person name="Sasaki M."/>
            <person name="Togashi T."/>
            <person name="Oyama M."/>
            <person name="Hata H."/>
            <person name="Watanabe M."/>
            <person name="Komatsu T."/>
            <person name="Mizushima-Sugano J."/>
            <person name="Satoh T."/>
            <person name="Shirai Y."/>
            <person name="Takahashi Y."/>
            <person name="Nakagawa K."/>
            <person name="Okumura K."/>
            <person name="Nagase T."/>
            <person name="Nomura N."/>
            <person name="Kikuchi H."/>
            <person name="Masuho Y."/>
            <person name="Yamashita R."/>
            <person name="Nakai K."/>
            <person name="Yada T."/>
            <person name="Nakamura Y."/>
            <person name="Ohara O."/>
            <person name="Isogai T."/>
            <person name="Sugano S."/>
        </authorList>
    </citation>
    <scope>NUCLEOTIDE SEQUENCE [LARGE SCALE MRNA] (ISOFORM 2)</scope>
    <scope>VARIANTS THR-9 AND GLY-131</scope>
    <source>
        <tissue>Brain</tissue>
        <tissue>Tongue</tissue>
    </source>
</reference>
<reference key="4">
    <citation type="journal article" date="2004" name="Nature">
        <title>The DNA sequence and comparative analysis of human chromosome 10.</title>
        <authorList>
            <person name="Deloukas P."/>
            <person name="Earthrowl M.E."/>
            <person name="Grafham D.V."/>
            <person name="Rubenfield M."/>
            <person name="French L."/>
            <person name="Steward C.A."/>
            <person name="Sims S.K."/>
            <person name="Jones M.C."/>
            <person name="Searle S."/>
            <person name="Scott C."/>
            <person name="Howe K."/>
            <person name="Hunt S.E."/>
            <person name="Andrews T.D."/>
            <person name="Gilbert J.G.R."/>
            <person name="Swarbreck D."/>
            <person name="Ashurst J.L."/>
            <person name="Taylor A."/>
            <person name="Battles J."/>
            <person name="Bird C.P."/>
            <person name="Ainscough R."/>
            <person name="Almeida J.P."/>
            <person name="Ashwell R.I.S."/>
            <person name="Ambrose K.D."/>
            <person name="Babbage A.K."/>
            <person name="Bagguley C.L."/>
            <person name="Bailey J."/>
            <person name="Banerjee R."/>
            <person name="Bates K."/>
            <person name="Beasley H."/>
            <person name="Bray-Allen S."/>
            <person name="Brown A.J."/>
            <person name="Brown J.Y."/>
            <person name="Burford D.C."/>
            <person name="Burrill W."/>
            <person name="Burton J."/>
            <person name="Cahill P."/>
            <person name="Camire D."/>
            <person name="Carter N.P."/>
            <person name="Chapman J.C."/>
            <person name="Clark S.Y."/>
            <person name="Clarke G."/>
            <person name="Clee C.M."/>
            <person name="Clegg S."/>
            <person name="Corby N."/>
            <person name="Coulson A."/>
            <person name="Dhami P."/>
            <person name="Dutta I."/>
            <person name="Dunn M."/>
            <person name="Faulkner L."/>
            <person name="Frankish A."/>
            <person name="Frankland J.A."/>
            <person name="Garner P."/>
            <person name="Garnett J."/>
            <person name="Gribble S."/>
            <person name="Griffiths C."/>
            <person name="Grocock R."/>
            <person name="Gustafson E."/>
            <person name="Hammond S."/>
            <person name="Harley J.L."/>
            <person name="Hart E."/>
            <person name="Heath P.D."/>
            <person name="Ho T.P."/>
            <person name="Hopkins B."/>
            <person name="Horne J."/>
            <person name="Howden P.J."/>
            <person name="Huckle E."/>
            <person name="Hynds C."/>
            <person name="Johnson C."/>
            <person name="Johnson D."/>
            <person name="Kana A."/>
            <person name="Kay M."/>
            <person name="Kimberley A.M."/>
            <person name="Kershaw J.K."/>
            <person name="Kokkinaki M."/>
            <person name="Laird G.K."/>
            <person name="Lawlor S."/>
            <person name="Lee H.M."/>
            <person name="Leongamornlert D.A."/>
            <person name="Laird G."/>
            <person name="Lloyd C."/>
            <person name="Lloyd D.M."/>
            <person name="Loveland J."/>
            <person name="Lovell J."/>
            <person name="McLaren S."/>
            <person name="McLay K.E."/>
            <person name="McMurray A."/>
            <person name="Mashreghi-Mohammadi M."/>
            <person name="Matthews L."/>
            <person name="Milne S."/>
            <person name="Nickerson T."/>
            <person name="Nguyen M."/>
            <person name="Overton-Larty E."/>
            <person name="Palmer S.A."/>
            <person name="Pearce A.V."/>
            <person name="Peck A.I."/>
            <person name="Pelan S."/>
            <person name="Phillimore B."/>
            <person name="Porter K."/>
            <person name="Rice C.M."/>
            <person name="Rogosin A."/>
            <person name="Ross M.T."/>
            <person name="Sarafidou T."/>
            <person name="Sehra H.K."/>
            <person name="Shownkeen R."/>
            <person name="Skuce C.D."/>
            <person name="Smith M."/>
            <person name="Standring L."/>
            <person name="Sycamore N."/>
            <person name="Tester J."/>
            <person name="Thorpe A."/>
            <person name="Torcasso W."/>
            <person name="Tracey A."/>
            <person name="Tromans A."/>
            <person name="Tsolas J."/>
            <person name="Wall M."/>
            <person name="Walsh J."/>
            <person name="Wang H."/>
            <person name="Weinstock K."/>
            <person name="West A.P."/>
            <person name="Willey D.L."/>
            <person name="Whitehead S.L."/>
            <person name="Wilming L."/>
            <person name="Wray P.W."/>
            <person name="Young L."/>
            <person name="Chen Y."/>
            <person name="Lovering R.C."/>
            <person name="Moschonas N.K."/>
            <person name="Siebert R."/>
            <person name="Fechtel K."/>
            <person name="Bentley D."/>
            <person name="Durbin R.M."/>
            <person name="Hubbard T."/>
            <person name="Doucette-Stamm L."/>
            <person name="Beck S."/>
            <person name="Smith D.R."/>
            <person name="Rogers J."/>
        </authorList>
    </citation>
    <scope>NUCLEOTIDE SEQUENCE [LARGE SCALE GENOMIC DNA]</scope>
</reference>
<reference key="5">
    <citation type="journal article" date="2004" name="Genome Res.">
        <title>The status, quality, and expansion of the NIH full-length cDNA project: the Mammalian Gene Collection (MGC).</title>
        <authorList>
            <consortium name="The MGC Project Team"/>
        </authorList>
    </citation>
    <scope>NUCLEOTIDE SEQUENCE [LARGE SCALE MRNA] (ISOFORM 3)</scope>
</reference>
<reference key="6">
    <citation type="journal article" date="2006" name="Science">
        <title>The consensus coding sequences of human breast and colorectal cancers.</title>
        <authorList>
            <person name="Sjoeblom T."/>
            <person name="Jones S."/>
            <person name="Wood L.D."/>
            <person name="Parsons D.W."/>
            <person name="Lin J."/>
            <person name="Barber T.D."/>
            <person name="Mandelker D."/>
            <person name="Leary R.J."/>
            <person name="Ptak J."/>
            <person name="Silliman N."/>
            <person name="Szabo S."/>
            <person name="Buckhaults P."/>
            <person name="Farrell C."/>
            <person name="Meeh P."/>
            <person name="Markowitz S.D."/>
            <person name="Willis J."/>
            <person name="Dawson D."/>
            <person name="Willson J.K.V."/>
            <person name="Gazdar A.F."/>
            <person name="Hartigan J."/>
            <person name="Wu L."/>
            <person name="Liu C."/>
            <person name="Parmigiani G."/>
            <person name="Park B.H."/>
            <person name="Bachman K.E."/>
            <person name="Papadopoulos N."/>
            <person name="Vogelstein B."/>
            <person name="Kinzler K.W."/>
            <person name="Velculescu V.E."/>
        </authorList>
    </citation>
    <scope>VARIANT [LARGE SCALE ANALYSIS] ARG-137</scope>
</reference>
<feature type="signal peptide" evidence="2">
    <location>
        <begin position="1"/>
        <end position="23"/>
    </location>
</feature>
<feature type="chain" id="PRO_0000307362" description="von Willebrand factor A domain-containing protein 2">
    <location>
        <begin position="24"/>
        <end position="755"/>
    </location>
</feature>
<feature type="domain" description="VWFA 1" evidence="4">
    <location>
        <begin position="51"/>
        <end position="222"/>
    </location>
</feature>
<feature type="domain" description="EGF-like 1" evidence="3">
    <location>
        <begin position="296"/>
        <end position="333"/>
    </location>
</feature>
<feature type="domain" description="VWFA 2" evidence="4">
    <location>
        <begin position="343"/>
        <end position="517"/>
    </location>
</feature>
<feature type="domain" description="VWFA 3" evidence="4">
    <location>
        <begin position="531"/>
        <end position="705"/>
    </location>
</feature>
<feature type="domain" description="EGF-like 2" evidence="3">
    <location>
        <begin position="712"/>
        <end position="748"/>
    </location>
</feature>
<feature type="site" description="Cleavage">
    <location>
        <begin position="267"/>
        <end position="268"/>
    </location>
</feature>
<feature type="glycosylation site" description="N-linked (GlcNAc...) asparagine" evidence="2">
    <location>
        <position position="147"/>
    </location>
</feature>
<feature type="disulfide bond" evidence="3">
    <location>
        <begin position="299"/>
        <end position="310"/>
    </location>
</feature>
<feature type="disulfide bond" evidence="3">
    <location>
        <begin position="304"/>
        <end position="320"/>
    </location>
</feature>
<feature type="disulfide bond" evidence="3">
    <location>
        <begin position="322"/>
        <end position="332"/>
    </location>
</feature>
<feature type="disulfide bond" evidence="3">
    <location>
        <begin position="716"/>
        <end position="727"/>
    </location>
</feature>
<feature type="disulfide bond" evidence="3">
    <location>
        <begin position="721"/>
        <end position="736"/>
    </location>
</feature>
<feature type="disulfide bond" evidence="3">
    <location>
        <begin position="738"/>
        <end position="747"/>
    </location>
</feature>
<feature type="splice variant" id="VSP_028737" description="In isoform 3." evidence="10">
    <location>
        <begin position="1"/>
        <end position="304"/>
    </location>
</feature>
<feature type="splice variant" id="VSP_028738" description="In isoform 3." evidence="10">
    <original>QNGGTCVPEGLDGYQCLCPLAFGGEANC</original>
    <variation>MEAHVFQKDWTATSASARWPLEGRLTVV</variation>
    <location>
        <begin position="305"/>
        <end position="332"/>
    </location>
</feature>
<feature type="splice variant" id="VSP_028739" description="In isoform 2 and isoform 3." evidence="9 10">
    <original>EAKQPVNLCKPSPCMNEGSCVLQNGSYRCKCRDGWEGPHCENRFLRRP</original>
    <variation>GEWGNPHPQGCPHGRPSA</variation>
    <location>
        <begin position="708"/>
        <end position="755"/>
    </location>
</feature>
<feature type="sequence variant" id="VAR_035418" description="In dbSNP:rs9664945." evidence="5 6">
    <original>A</original>
    <variation>T</variation>
    <location>
        <position position="9"/>
    </location>
</feature>
<feature type="sequence variant" id="VAR_035419" description="In dbSNP:rs597371." evidence="6">
    <original>E</original>
    <variation>G</variation>
    <location>
        <position position="131"/>
    </location>
</feature>
<feature type="sequence variant" id="VAR_036641" description="In a colorectal cancer sample; somatic mutation." evidence="8">
    <original>L</original>
    <variation>R</variation>
    <location>
        <position position="137"/>
    </location>
</feature>
<feature type="sequence conflict" description="In Ref. 3; BAC87116." evidence="11" ref="3">
    <original>T</original>
    <variation>A</variation>
    <location>
        <position position="76"/>
    </location>
</feature>
<feature type="sequence conflict" description="In Ref. 1; CAD60276." evidence="11" ref="1">
    <original>Q</original>
    <variation>R</variation>
    <location>
        <position position="428"/>
    </location>
</feature>
<dbReference type="EMBL" id="AJ616914">
    <property type="protein sequence ID" value="CAE83814.1"/>
    <property type="molecule type" value="mRNA"/>
</dbReference>
<dbReference type="EMBL" id="AJ536328">
    <property type="protein sequence ID" value="CAD60276.1"/>
    <property type="molecule type" value="mRNA"/>
</dbReference>
<dbReference type="EMBL" id="AY572972">
    <property type="protein sequence ID" value="AAT77225.1"/>
    <property type="molecule type" value="mRNA"/>
</dbReference>
<dbReference type="EMBL" id="AY572973">
    <property type="protein sequence ID" value="AAT77226.1"/>
    <property type="molecule type" value="Genomic_DNA"/>
</dbReference>
<dbReference type="EMBL" id="AK122716">
    <property type="protein sequence ID" value="BAC85505.1"/>
    <property type="molecule type" value="mRNA"/>
</dbReference>
<dbReference type="EMBL" id="AK127756">
    <property type="protein sequence ID" value="BAC87116.1"/>
    <property type="molecule type" value="mRNA"/>
</dbReference>
<dbReference type="EMBL" id="AC005383">
    <property type="status" value="NOT_ANNOTATED_CDS"/>
    <property type="molecule type" value="Genomic_DNA"/>
</dbReference>
<dbReference type="EMBL" id="AC022023">
    <property type="status" value="NOT_ANNOTATED_CDS"/>
    <property type="molecule type" value="Genomic_DNA"/>
</dbReference>
<dbReference type="EMBL" id="BC128588">
    <property type="protein sequence ID" value="AAI28589.1"/>
    <property type="molecule type" value="mRNA"/>
</dbReference>
<dbReference type="CCDS" id="CCDS7589.2">
    <molecule id="Q5GFL6-1"/>
</dbReference>
<dbReference type="RefSeq" id="NP_001258975.1">
    <molecule id="Q5GFL6-1"/>
    <property type="nucleotide sequence ID" value="NM_001272046.2"/>
</dbReference>
<dbReference type="RefSeq" id="NP_001307733.1">
    <molecule id="Q5GFL6-1"/>
    <property type="nucleotide sequence ID" value="NM_001320804.1"/>
</dbReference>
<dbReference type="RefSeq" id="XP_011538059.1">
    <property type="nucleotide sequence ID" value="XM_011539757.2"/>
</dbReference>
<dbReference type="RefSeq" id="XP_016871669.2">
    <molecule id="Q5GFL6-3"/>
    <property type="nucleotide sequence ID" value="XM_017016180.2"/>
</dbReference>
<dbReference type="RefSeq" id="XP_054221704.1">
    <molecule id="Q5GFL6-3"/>
    <property type="nucleotide sequence ID" value="XM_054365729.1"/>
</dbReference>
<dbReference type="SMR" id="Q5GFL6"/>
<dbReference type="BioGRID" id="131091">
    <property type="interactions" value="47"/>
</dbReference>
<dbReference type="FunCoup" id="Q5GFL6">
    <property type="interactions" value="91"/>
</dbReference>
<dbReference type="IntAct" id="Q5GFL6">
    <property type="interactions" value="32"/>
</dbReference>
<dbReference type="STRING" id="9606.ENSP00000376708"/>
<dbReference type="GlyCosmos" id="Q5GFL6">
    <property type="glycosylation" value="1 site, No reported glycans"/>
</dbReference>
<dbReference type="GlyGen" id="Q5GFL6">
    <property type="glycosylation" value="2 sites, 9 N-linked glycans (1 site)"/>
</dbReference>
<dbReference type="iPTMnet" id="Q5GFL6"/>
<dbReference type="PhosphoSitePlus" id="Q5GFL6"/>
<dbReference type="BioMuta" id="VWA2"/>
<dbReference type="DMDM" id="74722595"/>
<dbReference type="MassIVE" id="Q5GFL6"/>
<dbReference type="PaxDb" id="9606-ENSP00000376708"/>
<dbReference type="PeptideAtlas" id="Q5GFL6"/>
<dbReference type="ProteomicsDB" id="62826">
    <molecule id="Q5GFL6-1"/>
</dbReference>
<dbReference type="ProteomicsDB" id="62827">
    <molecule id="Q5GFL6-2"/>
</dbReference>
<dbReference type="ProteomicsDB" id="62828">
    <molecule id="Q5GFL6-3"/>
</dbReference>
<dbReference type="Antibodypedia" id="46200">
    <property type="antibodies" value="103 antibodies from 21 providers"/>
</dbReference>
<dbReference type="DNASU" id="340706"/>
<dbReference type="Ensembl" id="ENST00000392982.8">
    <molecule id="Q5GFL6-1"/>
    <property type="protein sequence ID" value="ENSP00000376708.3"/>
    <property type="gene ID" value="ENSG00000165816.13"/>
</dbReference>
<dbReference type="Ensembl" id="ENST00000603594.2">
    <molecule id="Q5GFL6-3"/>
    <property type="protein sequence ID" value="ENSP00000473752.2"/>
    <property type="gene ID" value="ENSG00000165816.13"/>
</dbReference>
<dbReference type="GeneID" id="340706"/>
<dbReference type="KEGG" id="hsa:340706"/>
<dbReference type="MANE-Select" id="ENST00000392982.8">
    <property type="protein sequence ID" value="ENSP00000376708.3"/>
    <property type="RefSeq nucleotide sequence ID" value="NM_001272046.2"/>
    <property type="RefSeq protein sequence ID" value="NP_001258975.1"/>
</dbReference>
<dbReference type="UCSC" id="uc001lbl.3">
    <molecule id="Q5GFL6-1"/>
    <property type="organism name" value="human"/>
</dbReference>
<dbReference type="AGR" id="HGNC:24709"/>
<dbReference type="CTD" id="340706"/>
<dbReference type="DisGeNET" id="340706"/>
<dbReference type="GeneCards" id="VWA2"/>
<dbReference type="HGNC" id="HGNC:24709">
    <property type="gene designation" value="VWA2"/>
</dbReference>
<dbReference type="HPA" id="ENSG00000165816">
    <property type="expression patterns" value="Tissue enhanced (stomach)"/>
</dbReference>
<dbReference type="MIM" id="618281">
    <property type="type" value="gene"/>
</dbReference>
<dbReference type="neXtProt" id="NX_Q5GFL6"/>
<dbReference type="OpenTargets" id="ENSG00000165816"/>
<dbReference type="PharmGKB" id="PA142670613"/>
<dbReference type="VEuPathDB" id="HostDB:ENSG00000165816"/>
<dbReference type="eggNOG" id="KOG3544">
    <property type="taxonomic scope" value="Eukaryota"/>
</dbReference>
<dbReference type="GeneTree" id="ENSGT00940000159040"/>
<dbReference type="HOGENOM" id="CLU_008905_7_3_1"/>
<dbReference type="InParanoid" id="Q5GFL6"/>
<dbReference type="OMA" id="MWCSAAM"/>
<dbReference type="OrthoDB" id="6132182at2759"/>
<dbReference type="PAN-GO" id="Q5GFL6">
    <property type="GO annotations" value="3 GO annotations based on evolutionary models"/>
</dbReference>
<dbReference type="PhylomeDB" id="Q5GFL6"/>
<dbReference type="TreeFam" id="TF318242"/>
<dbReference type="PathwayCommons" id="Q5GFL6"/>
<dbReference type="SignaLink" id="Q5GFL6"/>
<dbReference type="BioGRID-ORCS" id="340706">
    <property type="hits" value="7 hits in 1135 CRISPR screens"/>
</dbReference>
<dbReference type="ChiTaRS" id="VWA2">
    <property type="organism name" value="human"/>
</dbReference>
<dbReference type="GeneWiki" id="VWA2"/>
<dbReference type="GenomeRNAi" id="340706"/>
<dbReference type="Pharos" id="Q5GFL6">
    <property type="development level" value="Tbio"/>
</dbReference>
<dbReference type="PRO" id="PR:Q5GFL6"/>
<dbReference type="Proteomes" id="UP000005640">
    <property type="component" value="Chromosome 10"/>
</dbReference>
<dbReference type="RNAct" id="Q5GFL6">
    <property type="molecule type" value="protein"/>
</dbReference>
<dbReference type="Bgee" id="ENSG00000165816">
    <property type="expression patterns" value="Expressed in thymus and 94 other cell types or tissues"/>
</dbReference>
<dbReference type="GO" id="GO:0005604">
    <property type="term" value="C:basement membrane"/>
    <property type="evidence" value="ECO:0000318"/>
    <property type="project" value="GO_Central"/>
</dbReference>
<dbReference type="GO" id="GO:0070062">
    <property type="term" value="C:extracellular exosome"/>
    <property type="evidence" value="ECO:0007005"/>
    <property type="project" value="UniProtKB"/>
</dbReference>
<dbReference type="GO" id="GO:0005615">
    <property type="term" value="C:extracellular space"/>
    <property type="evidence" value="ECO:0000314"/>
    <property type="project" value="UniProtKB"/>
</dbReference>
<dbReference type="GO" id="GO:0005509">
    <property type="term" value="F:calcium ion binding"/>
    <property type="evidence" value="ECO:0007669"/>
    <property type="project" value="InterPro"/>
</dbReference>
<dbReference type="GO" id="GO:0042802">
    <property type="term" value="F:identical protein binding"/>
    <property type="evidence" value="ECO:0000314"/>
    <property type="project" value="UniProtKB"/>
</dbReference>
<dbReference type="GO" id="GO:0007161">
    <property type="term" value="P:calcium-independent cell-matrix adhesion"/>
    <property type="evidence" value="ECO:0000318"/>
    <property type="project" value="GO_Central"/>
</dbReference>
<dbReference type="GO" id="GO:0046626">
    <property type="term" value="P:regulation of insulin receptor signaling pathway"/>
    <property type="evidence" value="ECO:0000315"/>
    <property type="project" value="UniProtKB"/>
</dbReference>
<dbReference type="CDD" id="cd00053">
    <property type="entry name" value="EGF"/>
    <property type="match status" value="1"/>
</dbReference>
<dbReference type="CDD" id="cd00054">
    <property type="entry name" value="EGF_CA"/>
    <property type="match status" value="1"/>
</dbReference>
<dbReference type="CDD" id="cd01472">
    <property type="entry name" value="vWA_collagen"/>
    <property type="match status" value="1"/>
</dbReference>
<dbReference type="FunFam" id="2.10.25.10:FF:000066">
    <property type="entry name" value="FAT atypical cadherin 4"/>
    <property type="match status" value="1"/>
</dbReference>
<dbReference type="FunFam" id="2.10.25.10:FF:000336">
    <property type="entry name" value="von Willebrand factor A domain containing 2"/>
    <property type="match status" value="1"/>
</dbReference>
<dbReference type="FunFam" id="3.40.50.410:FF:000047">
    <property type="entry name" value="von Willebrand factor A domain containing 2"/>
    <property type="match status" value="1"/>
</dbReference>
<dbReference type="FunFam" id="3.40.50.410:FF:000054">
    <property type="entry name" value="von Willebrand factor A domain containing 2"/>
    <property type="match status" value="1"/>
</dbReference>
<dbReference type="FunFam" id="3.40.50.410:FF:000058">
    <property type="entry name" value="von Willebrand factor A domain containing 2"/>
    <property type="match status" value="1"/>
</dbReference>
<dbReference type="Gene3D" id="2.10.25.10">
    <property type="entry name" value="Laminin"/>
    <property type="match status" value="2"/>
</dbReference>
<dbReference type="Gene3D" id="3.40.50.410">
    <property type="entry name" value="von Willebrand factor, type A domain"/>
    <property type="match status" value="3"/>
</dbReference>
<dbReference type="InterPro" id="IPR050525">
    <property type="entry name" value="ECM_Assembly_Org"/>
</dbReference>
<dbReference type="InterPro" id="IPR001881">
    <property type="entry name" value="EGF-like_Ca-bd_dom"/>
</dbReference>
<dbReference type="InterPro" id="IPR000742">
    <property type="entry name" value="EGF-like_dom"/>
</dbReference>
<dbReference type="InterPro" id="IPR002035">
    <property type="entry name" value="VWF_A"/>
</dbReference>
<dbReference type="InterPro" id="IPR036465">
    <property type="entry name" value="vWFA_dom_sf"/>
</dbReference>
<dbReference type="PANTHER" id="PTHR24020">
    <property type="entry name" value="COLLAGEN ALPHA"/>
    <property type="match status" value="1"/>
</dbReference>
<dbReference type="PANTHER" id="PTHR24020:SF37">
    <property type="entry name" value="VON WILLEBRAND FACTOR A DOMAIN-CONTAINING PROTEIN 2"/>
    <property type="match status" value="1"/>
</dbReference>
<dbReference type="Pfam" id="PF00008">
    <property type="entry name" value="EGF"/>
    <property type="match status" value="2"/>
</dbReference>
<dbReference type="Pfam" id="PF00092">
    <property type="entry name" value="VWA"/>
    <property type="match status" value="3"/>
</dbReference>
<dbReference type="PRINTS" id="PR00453">
    <property type="entry name" value="VWFADOMAIN"/>
</dbReference>
<dbReference type="SMART" id="SM00181">
    <property type="entry name" value="EGF"/>
    <property type="match status" value="2"/>
</dbReference>
<dbReference type="SMART" id="SM00179">
    <property type="entry name" value="EGF_CA"/>
    <property type="match status" value="2"/>
</dbReference>
<dbReference type="SMART" id="SM00327">
    <property type="entry name" value="VWA"/>
    <property type="match status" value="3"/>
</dbReference>
<dbReference type="SUPFAM" id="SSF57196">
    <property type="entry name" value="EGF/Laminin"/>
    <property type="match status" value="1"/>
</dbReference>
<dbReference type="SUPFAM" id="SSF53300">
    <property type="entry name" value="vWA-like"/>
    <property type="match status" value="3"/>
</dbReference>
<dbReference type="PROSITE" id="PS00022">
    <property type="entry name" value="EGF_1"/>
    <property type="match status" value="1"/>
</dbReference>
<dbReference type="PROSITE" id="PS01186">
    <property type="entry name" value="EGF_2"/>
    <property type="match status" value="1"/>
</dbReference>
<dbReference type="PROSITE" id="PS50026">
    <property type="entry name" value="EGF_3"/>
    <property type="match status" value="2"/>
</dbReference>
<dbReference type="PROSITE" id="PS50234">
    <property type="entry name" value="VWFA"/>
    <property type="match status" value="3"/>
</dbReference>
<organism>
    <name type="scientific">Homo sapiens</name>
    <name type="common">Human</name>
    <dbReference type="NCBI Taxonomy" id="9606"/>
    <lineage>
        <taxon>Eukaryota</taxon>
        <taxon>Metazoa</taxon>
        <taxon>Chordata</taxon>
        <taxon>Craniata</taxon>
        <taxon>Vertebrata</taxon>
        <taxon>Euteleostomi</taxon>
        <taxon>Mammalia</taxon>
        <taxon>Eutheria</taxon>
        <taxon>Euarchontoglires</taxon>
        <taxon>Primates</taxon>
        <taxon>Haplorrhini</taxon>
        <taxon>Catarrhini</taxon>
        <taxon>Hominidae</taxon>
        <taxon>Homo</taxon>
    </lineage>
</organism>
<evidence type="ECO:0000250" key="1"/>
<evidence type="ECO:0000255" key="2"/>
<evidence type="ECO:0000255" key="3">
    <source>
        <dbReference type="PROSITE-ProRule" id="PRU00076"/>
    </source>
</evidence>
<evidence type="ECO:0000255" key="4">
    <source>
        <dbReference type="PROSITE-ProRule" id="PRU00219"/>
    </source>
</evidence>
<evidence type="ECO:0000269" key="5">
    <source>
    </source>
</evidence>
<evidence type="ECO:0000269" key="6">
    <source>
    </source>
</evidence>
<evidence type="ECO:0000269" key="7">
    <source>
    </source>
</evidence>
<evidence type="ECO:0000269" key="8">
    <source>
    </source>
</evidence>
<evidence type="ECO:0000303" key="9">
    <source>
    </source>
</evidence>
<evidence type="ECO:0000303" key="10">
    <source>
    </source>
</evidence>
<evidence type="ECO:0000305" key="11"/>
<proteinExistence type="evidence at protein level"/>
<comment type="subunit">
    <text evidence="1">Forms monomers and multimers.</text>
</comment>
<comment type="interaction">
    <interactant intactId="EBI-10243723">
        <id>Q5GFL6</id>
    </interactant>
    <interactant intactId="EBI-355744">
        <id>Q12933</id>
        <label>TRAF2</label>
    </interactant>
    <organismsDiffer>false</organismsDiffer>
    <experiments>3</experiments>
</comment>
<comment type="interaction">
    <interactant intactId="EBI-13451145">
        <id>Q5GFL6-3</id>
    </interactant>
    <interactant intactId="EBI-1047946">
        <id>P26045</id>
        <label>PTPN3</label>
    </interactant>
    <organismsDiffer>false</organismsDiffer>
    <experiments>3</experiments>
</comment>
<comment type="subcellular location">
    <subcellularLocation>
        <location>Secreted</location>
    </subcellularLocation>
</comment>
<comment type="alternative products">
    <event type="alternative splicing"/>
    <isoform>
        <id>Q5GFL6-1</id>
        <name>1</name>
        <sequence type="displayed"/>
    </isoform>
    <isoform>
        <id>Q5GFL6-2</id>
        <name>2</name>
        <sequence type="described" ref="VSP_028739"/>
    </isoform>
    <isoform>
        <id>Q5GFL6-3</id>
        <name>3</name>
        <sequence type="described" ref="VSP_028737 VSP_028738 VSP_028739"/>
    </isoform>
</comment>
<comment type="tissue specificity">
    <text evidence="7">Expression is generally absent in normal colon and other normal body tissues, but it is induced an average of 78-fold in Stage II, III, and IV colon cancers, as well as in colon adenomas and colon cancer cell lines.</text>
</comment>
<comment type="PTM">
    <text evidence="7">A 55 kDa form is produced by proteolytic cleavage.</text>
</comment>
<comment type="miscellaneous">
    <text>May be used as a serological marker for colon neoplasia.</text>
</comment>
<name>VWA2_HUMAN</name>